<name>CBID_BRUA1</name>
<protein>
    <recommendedName>
        <fullName evidence="1">Cobalt-precorrin-5B C(1)-methyltransferase</fullName>
        <ecNumber evidence="1">2.1.1.195</ecNumber>
    </recommendedName>
    <alternativeName>
        <fullName evidence="1">Cobalt-precorrin-6A synthase</fullName>
    </alternativeName>
</protein>
<accession>B2S6D5</accession>
<dbReference type="EC" id="2.1.1.195" evidence="1"/>
<dbReference type="EMBL" id="CP000887">
    <property type="protein sequence ID" value="ACD72732.1"/>
    <property type="molecule type" value="Genomic_DNA"/>
</dbReference>
<dbReference type="RefSeq" id="WP_002964416.1">
    <property type="nucleotide sequence ID" value="NC_010742.1"/>
</dbReference>
<dbReference type="SMR" id="B2S6D5"/>
<dbReference type="KEGG" id="bmc:BAbS19_I12310"/>
<dbReference type="HOGENOM" id="CLU_041273_0_0_5"/>
<dbReference type="UniPathway" id="UPA00148">
    <property type="reaction ID" value="UER00227"/>
</dbReference>
<dbReference type="Proteomes" id="UP000002565">
    <property type="component" value="Chromosome 1"/>
</dbReference>
<dbReference type="GO" id="GO:0043780">
    <property type="term" value="F:cobalt-precorrin-5B C1-methyltransferase activity"/>
    <property type="evidence" value="ECO:0007669"/>
    <property type="project" value="RHEA"/>
</dbReference>
<dbReference type="GO" id="GO:0019251">
    <property type="term" value="P:anaerobic cobalamin biosynthetic process"/>
    <property type="evidence" value="ECO:0007669"/>
    <property type="project" value="UniProtKB-UniRule"/>
</dbReference>
<dbReference type="GO" id="GO:0032259">
    <property type="term" value="P:methylation"/>
    <property type="evidence" value="ECO:0007669"/>
    <property type="project" value="UniProtKB-KW"/>
</dbReference>
<dbReference type="Gene3D" id="3.30.2110.10">
    <property type="entry name" value="CbiD-like"/>
    <property type="match status" value="1"/>
</dbReference>
<dbReference type="HAMAP" id="MF_00787">
    <property type="entry name" value="CbiD"/>
    <property type="match status" value="1"/>
</dbReference>
<dbReference type="InterPro" id="IPR002748">
    <property type="entry name" value="CbiD"/>
</dbReference>
<dbReference type="InterPro" id="IPR036074">
    <property type="entry name" value="CbiD_sf"/>
</dbReference>
<dbReference type="NCBIfam" id="TIGR00312">
    <property type="entry name" value="cbiD"/>
    <property type="match status" value="1"/>
</dbReference>
<dbReference type="NCBIfam" id="NF000849">
    <property type="entry name" value="PRK00075.1-1"/>
    <property type="match status" value="1"/>
</dbReference>
<dbReference type="PANTHER" id="PTHR35863">
    <property type="entry name" value="COBALT-PRECORRIN-5B C(1)-METHYLTRANSFERASE"/>
    <property type="match status" value="1"/>
</dbReference>
<dbReference type="PANTHER" id="PTHR35863:SF1">
    <property type="entry name" value="COBALT-PRECORRIN-5B C(1)-METHYLTRANSFERASE"/>
    <property type="match status" value="1"/>
</dbReference>
<dbReference type="Pfam" id="PF01888">
    <property type="entry name" value="CbiD"/>
    <property type="match status" value="1"/>
</dbReference>
<dbReference type="PIRSF" id="PIRSF026782">
    <property type="entry name" value="CbiD"/>
    <property type="match status" value="1"/>
</dbReference>
<dbReference type="SUPFAM" id="SSF111342">
    <property type="entry name" value="CbiD-like"/>
    <property type="match status" value="1"/>
</dbReference>
<feature type="chain" id="PRO_1000133726" description="Cobalt-precorrin-5B C(1)-methyltransferase">
    <location>
        <begin position="1"/>
        <end position="368"/>
    </location>
</feature>
<keyword id="KW-0169">Cobalamin biosynthesis</keyword>
<keyword id="KW-0489">Methyltransferase</keyword>
<keyword id="KW-0949">S-adenosyl-L-methionine</keyword>
<keyword id="KW-0808">Transferase</keyword>
<organism>
    <name type="scientific">Brucella abortus (strain S19)</name>
    <dbReference type="NCBI Taxonomy" id="430066"/>
    <lineage>
        <taxon>Bacteria</taxon>
        <taxon>Pseudomonadati</taxon>
        <taxon>Pseudomonadota</taxon>
        <taxon>Alphaproteobacteria</taxon>
        <taxon>Hyphomicrobiales</taxon>
        <taxon>Brucellaceae</taxon>
        <taxon>Brucella/Ochrobactrum group</taxon>
        <taxon>Brucella</taxon>
    </lineage>
</organism>
<evidence type="ECO:0000255" key="1">
    <source>
        <dbReference type="HAMAP-Rule" id="MF_00787"/>
    </source>
</evidence>
<proteinExistence type="inferred from homology"/>
<reference key="1">
    <citation type="journal article" date="2008" name="PLoS ONE">
        <title>Genome sequence of Brucella abortus vaccine strain S19 compared to virulent strains yields candidate virulence genes.</title>
        <authorList>
            <person name="Crasta O.R."/>
            <person name="Folkerts O."/>
            <person name="Fei Z."/>
            <person name="Mane S.P."/>
            <person name="Evans C."/>
            <person name="Martino-Catt S."/>
            <person name="Bricker B."/>
            <person name="Yu G."/>
            <person name="Du L."/>
            <person name="Sobral B.W."/>
        </authorList>
    </citation>
    <scope>NUCLEOTIDE SEQUENCE [LARGE SCALE GENOMIC DNA]</scope>
    <source>
        <strain>S19</strain>
    </source>
</reference>
<comment type="function">
    <text evidence="1">Catalyzes the methylation of C-1 in cobalt-precorrin-5B to form cobalt-precorrin-6A.</text>
</comment>
<comment type="catalytic activity">
    <reaction evidence="1">
        <text>Co-precorrin-5B + S-adenosyl-L-methionine = Co-precorrin-6A + S-adenosyl-L-homocysteine</text>
        <dbReference type="Rhea" id="RHEA:26285"/>
        <dbReference type="ChEBI" id="CHEBI:57856"/>
        <dbReference type="ChEBI" id="CHEBI:59789"/>
        <dbReference type="ChEBI" id="CHEBI:60063"/>
        <dbReference type="ChEBI" id="CHEBI:60064"/>
        <dbReference type="EC" id="2.1.1.195"/>
    </reaction>
</comment>
<comment type="pathway">
    <text evidence="1">Cofactor biosynthesis; adenosylcobalamin biosynthesis; cob(II)yrinate a,c-diamide from sirohydrochlorin (anaerobic route): step 6/10.</text>
</comment>
<comment type="similarity">
    <text evidence="1">Belongs to the CbiD family.</text>
</comment>
<sequence length="368" mass="38530">MNDETTPANKNPEKAELRCGWTTGACATAATKAALTALITGEFPDPVGIILPKGEVPYFQLAYEGLGEGYAMAGIVKDAGDDPDVTHGATIISTVYPAPPGTGIIFRAGEGVGTVTREGLAIPPGEAAINPVPRRMMTEICEAICAEYGLPADLVITISVPGGEEIAQKTWNPRLGIIGGISILGTTGVVHPFSCSAWIHSIHRGIDVARAAGQKHVLGATGSTSEDAAQALYNLPDFAILDMGDFAGGVLKYLREHPIDRLTIAGGFAKLTKLAQGALDLHSSRSQVDKGFLWQIAERAGAPAGMKERILLANTAMEVLELTQSIGIDIAGPIALEARQTALKTLRGAPVEVEIIVTDRKGNILARV</sequence>
<gene>
    <name evidence="1" type="primary">cbiD</name>
    <name type="ordered locus">BAbS19_I12310</name>
</gene>